<feature type="chain" id="PRO_0000056820" description="Uncharacterized protein aq_1480">
    <location>
        <begin position="1"/>
        <end position="196"/>
    </location>
</feature>
<reference key="1">
    <citation type="journal article" date="1998" name="Nature">
        <title>The complete genome of the hyperthermophilic bacterium Aquifex aeolicus.</title>
        <authorList>
            <person name="Deckert G."/>
            <person name="Warren P.V."/>
            <person name="Gaasterland T."/>
            <person name="Young W.G."/>
            <person name="Lenox A.L."/>
            <person name="Graham D.E."/>
            <person name="Overbeek R."/>
            <person name="Snead M.A."/>
            <person name="Keller M."/>
            <person name="Aujay M."/>
            <person name="Huber R."/>
            <person name="Feldman R.A."/>
            <person name="Short J.M."/>
            <person name="Olsen G.J."/>
            <person name="Swanson R.V."/>
        </authorList>
    </citation>
    <scope>NUCLEOTIDE SEQUENCE [LARGE SCALE GENOMIC DNA]</scope>
    <source>
        <strain>VF5</strain>
    </source>
</reference>
<gene>
    <name type="ordered locus">aq_1480</name>
</gene>
<dbReference type="EMBL" id="AE000657">
    <property type="protein sequence ID" value="AAC07423.1"/>
    <property type="molecule type" value="Genomic_DNA"/>
</dbReference>
<dbReference type="PIR" id="F70428">
    <property type="entry name" value="F70428"/>
</dbReference>
<dbReference type="RefSeq" id="NP_214021.1">
    <property type="nucleotide sequence ID" value="NC_000918.1"/>
</dbReference>
<dbReference type="RefSeq" id="WP_010880959.1">
    <property type="nucleotide sequence ID" value="NC_000918.1"/>
</dbReference>
<dbReference type="SMR" id="O67456"/>
<dbReference type="FunCoup" id="O67456">
    <property type="interactions" value="30"/>
</dbReference>
<dbReference type="STRING" id="224324.aq_1480"/>
<dbReference type="EnsemblBacteria" id="AAC07423">
    <property type="protein sequence ID" value="AAC07423"/>
    <property type="gene ID" value="aq_1480"/>
</dbReference>
<dbReference type="KEGG" id="aae:aq_1480"/>
<dbReference type="PATRIC" id="fig|224324.8.peg.1154"/>
<dbReference type="eggNOG" id="COG0558">
    <property type="taxonomic scope" value="Bacteria"/>
</dbReference>
<dbReference type="HOGENOM" id="CLU_080384_1_0_0"/>
<dbReference type="InParanoid" id="O67456"/>
<dbReference type="OrthoDB" id="9785831at2"/>
<dbReference type="Proteomes" id="UP000000798">
    <property type="component" value="Chromosome"/>
</dbReference>
<dbReference type="GO" id="GO:0016020">
    <property type="term" value="C:membrane"/>
    <property type="evidence" value="ECO:0007669"/>
    <property type="project" value="InterPro"/>
</dbReference>
<dbReference type="GO" id="GO:0016780">
    <property type="term" value="F:phosphotransferase activity, for other substituted phosphate groups"/>
    <property type="evidence" value="ECO:0007669"/>
    <property type="project" value="InterPro"/>
</dbReference>
<dbReference type="GO" id="GO:0046474">
    <property type="term" value="P:glycerophospholipid biosynthetic process"/>
    <property type="evidence" value="ECO:0000318"/>
    <property type="project" value="GO_Central"/>
</dbReference>
<dbReference type="Gene3D" id="1.20.120.1760">
    <property type="match status" value="1"/>
</dbReference>
<dbReference type="InterPro" id="IPR000462">
    <property type="entry name" value="CDP-OH_P_trans"/>
</dbReference>
<dbReference type="InterPro" id="IPR043130">
    <property type="entry name" value="CDP-OH_PTrfase_TM_dom"/>
</dbReference>
<dbReference type="InterPro" id="IPR048254">
    <property type="entry name" value="CDP_ALCOHOL_P_TRANSF_CS"/>
</dbReference>
<dbReference type="Pfam" id="PF01066">
    <property type="entry name" value="CDP-OH_P_transf"/>
    <property type="match status" value="1"/>
</dbReference>
<dbReference type="PROSITE" id="PS00379">
    <property type="entry name" value="CDP_ALCOHOL_P_TRANSF"/>
    <property type="match status" value="1"/>
</dbReference>
<sequence length="196" mass="21735">MSLLTRRLKPYYEELLEPLVNFFGKYNVSPNLITLFGLFLVGLGSFFLYLENLILAFLLLLLGALADSIDGALARRLNLKTEFGAFLDSTVDRFSDALPFTALGVHYASYGDETGVLLSFLALISSFGVSYTRARAESLGVYGLGGVFERTERWIVLLGSILLGLLKLGLFIITLGSLITVFQRVYETKKALEVKR</sequence>
<organism>
    <name type="scientific">Aquifex aeolicus (strain VF5)</name>
    <dbReference type="NCBI Taxonomy" id="224324"/>
    <lineage>
        <taxon>Bacteria</taxon>
        <taxon>Pseudomonadati</taxon>
        <taxon>Aquificota</taxon>
        <taxon>Aquificia</taxon>
        <taxon>Aquificales</taxon>
        <taxon>Aquificaceae</taxon>
        <taxon>Aquifex</taxon>
    </lineage>
</organism>
<evidence type="ECO:0000305" key="1"/>
<protein>
    <recommendedName>
        <fullName>Uncharacterized protein aq_1480</fullName>
    </recommendedName>
</protein>
<accession>O67456</accession>
<keyword id="KW-1185">Reference proteome</keyword>
<keyword id="KW-0808">Transferase</keyword>
<proteinExistence type="inferred from homology"/>
<name>Y1480_AQUAE</name>
<comment type="similarity">
    <text evidence="1">Belongs to the CDP-alcohol phosphatidyltransferase class-I family.</text>
</comment>